<name>TIG_YERPY</name>
<keyword id="KW-0131">Cell cycle</keyword>
<keyword id="KW-0132">Cell division</keyword>
<keyword id="KW-0143">Chaperone</keyword>
<keyword id="KW-0963">Cytoplasm</keyword>
<keyword id="KW-0413">Isomerase</keyword>
<keyword id="KW-0697">Rotamase</keyword>
<protein>
    <recommendedName>
        <fullName evidence="1">Trigger factor</fullName>
        <shortName evidence="1">TF</shortName>
        <ecNumber evidence="1">5.2.1.8</ecNumber>
    </recommendedName>
    <alternativeName>
        <fullName evidence="1">PPIase</fullName>
    </alternativeName>
</protein>
<reference key="1">
    <citation type="submission" date="2008-02" db="EMBL/GenBank/DDBJ databases">
        <title>Complete sequence of Yersinia pseudotuberculosis YPIII.</title>
        <authorList>
            <consortium name="US DOE Joint Genome Institute"/>
            <person name="Copeland A."/>
            <person name="Lucas S."/>
            <person name="Lapidus A."/>
            <person name="Glavina del Rio T."/>
            <person name="Dalin E."/>
            <person name="Tice H."/>
            <person name="Bruce D."/>
            <person name="Goodwin L."/>
            <person name="Pitluck S."/>
            <person name="Munk A.C."/>
            <person name="Brettin T."/>
            <person name="Detter J.C."/>
            <person name="Han C."/>
            <person name="Tapia R."/>
            <person name="Schmutz J."/>
            <person name="Larimer F."/>
            <person name="Land M."/>
            <person name="Hauser L."/>
            <person name="Challacombe J.F."/>
            <person name="Green L."/>
            <person name="Lindler L.E."/>
            <person name="Nikolich M.P."/>
            <person name="Richardson P."/>
        </authorList>
    </citation>
    <scope>NUCLEOTIDE SEQUENCE [LARGE SCALE GENOMIC DNA]</scope>
    <source>
        <strain>YPIII</strain>
    </source>
</reference>
<proteinExistence type="inferred from homology"/>
<accession>B1JHS2</accession>
<organism>
    <name type="scientific">Yersinia pseudotuberculosis serotype O:3 (strain YPIII)</name>
    <dbReference type="NCBI Taxonomy" id="502800"/>
    <lineage>
        <taxon>Bacteria</taxon>
        <taxon>Pseudomonadati</taxon>
        <taxon>Pseudomonadota</taxon>
        <taxon>Gammaproteobacteria</taxon>
        <taxon>Enterobacterales</taxon>
        <taxon>Yersiniaceae</taxon>
        <taxon>Yersinia</taxon>
    </lineage>
</organism>
<comment type="function">
    <text evidence="1">Involved in protein export. Acts as a chaperone by maintaining the newly synthesized protein in an open conformation. Functions as a peptidyl-prolyl cis-trans isomerase.</text>
</comment>
<comment type="catalytic activity">
    <reaction evidence="1">
        <text>[protein]-peptidylproline (omega=180) = [protein]-peptidylproline (omega=0)</text>
        <dbReference type="Rhea" id="RHEA:16237"/>
        <dbReference type="Rhea" id="RHEA-COMP:10747"/>
        <dbReference type="Rhea" id="RHEA-COMP:10748"/>
        <dbReference type="ChEBI" id="CHEBI:83833"/>
        <dbReference type="ChEBI" id="CHEBI:83834"/>
        <dbReference type="EC" id="5.2.1.8"/>
    </reaction>
</comment>
<comment type="subcellular location">
    <subcellularLocation>
        <location>Cytoplasm</location>
    </subcellularLocation>
    <text evidence="1">About half TF is bound to the ribosome near the polypeptide exit tunnel while the other half is free in the cytoplasm.</text>
</comment>
<comment type="domain">
    <text evidence="1">Consists of 3 domains; the N-terminus binds the ribosome, the middle domain has PPIase activity, while the C-terminus has intrinsic chaperone activity on its own.</text>
</comment>
<comment type="similarity">
    <text evidence="1">Belongs to the FKBP-type PPIase family. Tig subfamily.</text>
</comment>
<feature type="chain" id="PRO_1000115607" description="Trigger factor">
    <location>
        <begin position="1"/>
        <end position="434"/>
    </location>
</feature>
<feature type="domain" description="PPIase FKBP-type" evidence="1">
    <location>
        <begin position="161"/>
        <end position="246"/>
    </location>
</feature>
<dbReference type="EC" id="5.2.1.8" evidence="1"/>
<dbReference type="EMBL" id="CP000950">
    <property type="protein sequence ID" value="ACA69504.1"/>
    <property type="molecule type" value="Genomic_DNA"/>
</dbReference>
<dbReference type="RefSeq" id="WP_002208643.1">
    <property type="nucleotide sequence ID" value="NZ_CP009792.1"/>
</dbReference>
<dbReference type="SMR" id="B1JHS2"/>
<dbReference type="GeneID" id="57975553"/>
<dbReference type="KEGG" id="ypy:YPK_3235"/>
<dbReference type="PATRIC" id="fig|502800.11.peg.3962"/>
<dbReference type="GO" id="GO:0005737">
    <property type="term" value="C:cytoplasm"/>
    <property type="evidence" value="ECO:0007669"/>
    <property type="project" value="UniProtKB-SubCell"/>
</dbReference>
<dbReference type="GO" id="GO:0003755">
    <property type="term" value="F:peptidyl-prolyl cis-trans isomerase activity"/>
    <property type="evidence" value="ECO:0007669"/>
    <property type="project" value="UniProtKB-UniRule"/>
</dbReference>
<dbReference type="GO" id="GO:0044183">
    <property type="term" value="F:protein folding chaperone"/>
    <property type="evidence" value="ECO:0007669"/>
    <property type="project" value="TreeGrafter"/>
</dbReference>
<dbReference type="GO" id="GO:0043022">
    <property type="term" value="F:ribosome binding"/>
    <property type="evidence" value="ECO:0007669"/>
    <property type="project" value="TreeGrafter"/>
</dbReference>
<dbReference type="GO" id="GO:0051083">
    <property type="term" value="P:'de novo' cotranslational protein folding"/>
    <property type="evidence" value="ECO:0007669"/>
    <property type="project" value="TreeGrafter"/>
</dbReference>
<dbReference type="GO" id="GO:0051301">
    <property type="term" value="P:cell division"/>
    <property type="evidence" value="ECO:0007669"/>
    <property type="project" value="UniProtKB-KW"/>
</dbReference>
<dbReference type="GO" id="GO:0061077">
    <property type="term" value="P:chaperone-mediated protein folding"/>
    <property type="evidence" value="ECO:0007669"/>
    <property type="project" value="TreeGrafter"/>
</dbReference>
<dbReference type="GO" id="GO:0015031">
    <property type="term" value="P:protein transport"/>
    <property type="evidence" value="ECO:0007669"/>
    <property type="project" value="UniProtKB-UniRule"/>
</dbReference>
<dbReference type="GO" id="GO:0043335">
    <property type="term" value="P:protein unfolding"/>
    <property type="evidence" value="ECO:0007669"/>
    <property type="project" value="TreeGrafter"/>
</dbReference>
<dbReference type="FunFam" id="1.10.3120.10:FF:000001">
    <property type="entry name" value="Trigger factor"/>
    <property type="match status" value="1"/>
</dbReference>
<dbReference type="FunFam" id="3.10.50.40:FF:000001">
    <property type="entry name" value="Trigger factor"/>
    <property type="match status" value="1"/>
</dbReference>
<dbReference type="FunFam" id="3.30.70.1050:FF:000001">
    <property type="entry name" value="Trigger factor"/>
    <property type="match status" value="1"/>
</dbReference>
<dbReference type="Gene3D" id="3.10.50.40">
    <property type="match status" value="1"/>
</dbReference>
<dbReference type="Gene3D" id="3.30.70.1050">
    <property type="entry name" value="Trigger factor ribosome-binding domain"/>
    <property type="match status" value="1"/>
</dbReference>
<dbReference type="Gene3D" id="1.10.3120.10">
    <property type="entry name" value="Trigger factor, C-terminal domain"/>
    <property type="match status" value="1"/>
</dbReference>
<dbReference type="HAMAP" id="MF_00303">
    <property type="entry name" value="Trigger_factor_Tig"/>
    <property type="match status" value="1"/>
</dbReference>
<dbReference type="InterPro" id="IPR046357">
    <property type="entry name" value="PPIase_dom_sf"/>
</dbReference>
<dbReference type="InterPro" id="IPR001179">
    <property type="entry name" value="PPIase_FKBP_dom"/>
</dbReference>
<dbReference type="InterPro" id="IPR005215">
    <property type="entry name" value="Trig_fac"/>
</dbReference>
<dbReference type="InterPro" id="IPR008880">
    <property type="entry name" value="Trigger_fac_C"/>
</dbReference>
<dbReference type="InterPro" id="IPR037041">
    <property type="entry name" value="Trigger_fac_C_sf"/>
</dbReference>
<dbReference type="InterPro" id="IPR008881">
    <property type="entry name" value="Trigger_fac_ribosome-bd_bac"/>
</dbReference>
<dbReference type="InterPro" id="IPR036611">
    <property type="entry name" value="Trigger_fac_ribosome-bd_sf"/>
</dbReference>
<dbReference type="InterPro" id="IPR027304">
    <property type="entry name" value="Trigger_fact/SurA_dom_sf"/>
</dbReference>
<dbReference type="NCBIfam" id="TIGR00115">
    <property type="entry name" value="tig"/>
    <property type="match status" value="1"/>
</dbReference>
<dbReference type="PANTHER" id="PTHR30560">
    <property type="entry name" value="TRIGGER FACTOR CHAPERONE AND PEPTIDYL-PROLYL CIS/TRANS ISOMERASE"/>
    <property type="match status" value="1"/>
</dbReference>
<dbReference type="PANTHER" id="PTHR30560:SF3">
    <property type="entry name" value="TRIGGER FACTOR-LIKE PROTEIN TIG, CHLOROPLASTIC"/>
    <property type="match status" value="1"/>
</dbReference>
<dbReference type="Pfam" id="PF00254">
    <property type="entry name" value="FKBP_C"/>
    <property type="match status" value="1"/>
</dbReference>
<dbReference type="Pfam" id="PF05698">
    <property type="entry name" value="Trigger_C"/>
    <property type="match status" value="1"/>
</dbReference>
<dbReference type="Pfam" id="PF05697">
    <property type="entry name" value="Trigger_N"/>
    <property type="match status" value="1"/>
</dbReference>
<dbReference type="PIRSF" id="PIRSF003095">
    <property type="entry name" value="Trigger_factor"/>
    <property type="match status" value="1"/>
</dbReference>
<dbReference type="SUPFAM" id="SSF54534">
    <property type="entry name" value="FKBP-like"/>
    <property type="match status" value="1"/>
</dbReference>
<dbReference type="SUPFAM" id="SSF109998">
    <property type="entry name" value="Triger factor/SurA peptide-binding domain-like"/>
    <property type="match status" value="1"/>
</dbReference>
<dbReference type="SUPFAM" id="SSF102735">
    <property type="entry name" value="Trigger factor ribosome-binding domain"/>
    <property type="match status" value="1"/>
</dbReference>
<dbReference type="PROSITE" id="PS50059">
    <property type="entry name" value="FKBP_PPIASE"/>
    <property type="match status" value="1"/>
</dbReference>
<gene>
    <name evidence="1" type="primary">tig</name>
    <name type="ordered locus">YPK_3235</name>
</gene>
<evidence type="ECO:0000255" key="1">
    <source>
        <dbReference type="HAMAP-Rule" id="MF_00303"/>
    </source>
</evidence>
<sequence length="434" mass="48241">MQVSVETTQGLGRRVTITVAADSIEKAVKSELVKAAKNVRIDGFRKGHVPMNIVEQRYGASVRQDVLGDLMQRNFVDAIIKEKINPAGAPNYVPGEYKQGEDFTYSVEFEVYPEVELKDLESIEVEKPVVEVNDADVDTMLETLRKQQATWKETDAAATAEDRATLDFTGSIDGEEFEGGKATDFVLAMGQGRMIPGFEEGVIGHKAGEEFTIDVNFPEDYHAENLKGKSAKFAIVLKKVEVRELPELTEEFIKRFGVADGSLAGLRAEVRKNMERELKGAVRNRVKTQAIDGLVSANNIDVPTALVDGEIDVLRRQAAQRFGGNEKQAAELPRELFEEQAKRRVVVGLLLGEVISQHELKADEDRVKALIEEMASAYEDPQEVIEFYSKNKELMNNMRNVALEEQAVETLLAKAKVTEKPTTFSELMNQTTAA</sequence>